<keyword id="KW-1157">Cap snatching</keyword>
<keyword id="KW-0255">Endonuclease</keyword>
<keyword id="KW-1262">Eukaryotic host gene expression shutoff by virus</keyword>
<keyword id="KW-1191">Eukaryotic host transcription shutoff by virus</keyword>
<keyword id="KW-1035">Host cytoplasm</keyword>
<keyword id="KW-1190">Host gene expression shutoff by virus</keyword>
<keyword id="KW-1048">Host nucleus</keyword>
<keyword id="KW-0945">Host-virus interaction</keyword>
<keyword id="KW-0378">Hydrolase</keyword>
<keyword id="KW-1104">Inhibition of host RNA polymerase II by virus</keyword>
<keyword id="KW-0464">Manganese</keyword>
<keyword id="KW-0479">Metal-binding</keyword>
<keyword id="KW-0540">Nuclease</keyword>
<keyword id="KW-0597">Phosphoprotein</keyword>
<keyword id="KW-0688">Ribosomal frameshifting</keyword>
<organismHost>
    <name type="scientific">Aves</name>
    <dbReference type="NCBI Taxonomy" id="8782"/>
</organismHost>
<organismHost>
    <name type="scientific">Equus caballus</name>
    <name type="common">Horse</name>
    <dbReference type="NCBI Taxonomy" id="9796"/>
</organismHost>
<organismHost>
    <name type="scientific">Homo sapiens</name>
    <name type="common">Human</name>
    <dbReference type="NCBI Taxonomy" id="9606"/>
</organismHost>
<organismHost>
    <name type="scientific">Phocidae</name>
    <name type="common">true seals</name>
    <dbReference type="NCBI Taxonomy" id="9709"/>
</organismHost>
<feature type="chain" id="PRO_0000078785" description="Polymerase acidic protein">
    <location>
        <begin position="1"/>
        <end position="716"/>
    </location>
</feature>
<feature type="short sequence motif" description="Nuclear localization signal 1 (NLS1)" evidence="1 2">
    <location>
        <begin position="124"/>
        <end position="139"/>
    </location>
</feature>
<feature type="short sequence motif" description="Nuclear localization signal 2 (NLS2)" evidence="1 2">
    <location>
        <begin position="184"/>
        <end position="247"/>
    </location>
</feature>
<feature type="binding site" evidence="2">
    <location>
        <position position="41"/>
    </location>
    <ligand>
        <name>Mn(2+)</name>
        <dbReference type="ChEBI" id="CHEBI:29035"/>
        <label>1</label>
    </ligand>
</feature>
<feature type="binding site" evidence="2">
    <location>
        <position position="80"/>
    </location>
    <ligand>
        <name>Mn(2+)</name>
        <dbReference type="ChEBI" id="CHEBI:29035"/>
        <label>2</label>
    </ligand>
</feature>
<feature type="binding site" evidence="2">
    <location>
        <position position="108"/>
    </location>
    <ligand>
        <name>Mn(2+)</name>
        <dbReference type="ChEBI" id="CHEBI:29035"/>
        <label>1</label>
    </ligand>
</feature>
<feature type="binding site" evidence="2">
    <location>
        <position position="108"/>
    </location>
    <ligand>
        <name>Mn(2+)</name>
        <dbReference type="ChEBI" id="CHEBI:29035"/>
        <label>2</label>
    </ligand>
</feature>
<feature type="binding site" evidence="2">
    <location>
        <position position="119"/>
    </location>
    <ligand>
        <name>Mn(2+)</name>
        <dbReference type="ChEBI" id="CHEBI:29035"/>
        <label>1</label>
    </ligand>
</feature>
<feature type="binding site" evidence="2">
    <location>
        <position position="120"/>
    </location>
    <ligand>
        <name>Mn(2+)</name>
        <dbReference type="ChEBI" id="CHEBI:29035"/>
        <label>1</label>
    </ligand>
</feature>
<protein>
    <recommendedName>
        <fullName evidence="2">Polymerase acidic protein</fullName>
        <ecNumber evidence="2">3.1.-.-</ecNumber>
    </recommendedName>
    <alternativeName>
        <fullName evidence="2">RNA-directed RNA polymerase subunit P2</fullName>
    </alternativeName>
</protein>
<organism>
    <name type="scientific">Influenza A virus (strain A/Equine/London/1416/1973 H7N7)</name>
    <dbReference type="NCBI Taxonomy" id="380340"/>
    <lineage>
        <taxon>Viruses</taxon>
        <taxon>Riboviria</taxon>
        <taxon>Orthornavirae</taxon>
        <taxon>Negarnaviricota</taxon>
        <taxon>Polyploviricotina</taxon>
        <taxon>Insthoviricetes</taxon>
        <taxon>Articulavirales</taxon>
        <taxon>Orthomyxoviridae</taxon>
        <taxon>Alphainfluenzavirus</taxon>
        <taxon>Alphainfluenzavirus influenzae</taxon>
        <taxon>Influenza A virus</taxon>
    </lineage>
</organism>
<evidence type="ECO:0000250" key="1">
    <source>
        <dbReference type="UniProtKB" id="P03433"/>
    </source>
</evidence>
<evidence type="ECO:0000255" key="2">
    <source>
        <dbReference type="HAMAP-Rule" id="MF_04063"/>
    </source>
</evidence>
<proteinExistence type="inferred from homology"/>
<name>PA_I73A4</name>
<dbReference type="EC" id="3.1.-.-" evidence="2"/>
<dbReference type="EMBL" id="M26087">
    <property type="protein sequence ID" value="AAA43104.1"/>
    <property type="molecule type" value="Genomic_RNA"/>
</dbReference>
<dbReference type="SMR" id="P13168"/>
<dbReference type="MEROPS" id="S62.001"/>
<dbReference type="GO" id="GO:0030430">
    <property type="term" value="C:host cell cytoplasm"/>
    <property type="evidence" value="ECO:0007669"/>
    <property type="project" value="UniProtKB-SubCell"/>
</dbReference>
<dbReference type="GO" id="GO:0042025">
    <property type="term" value="C:host cell nucleus"/>
    <property type="evidence" value="ECO:0007669"/>
    <property type="project" value="UniProtKB-SubCell"/>
</dbReference>
<dbReference type="GO" id="GO:0004519">
    <property type="term" value="F:endonuclease activity"/>
    <property type="evidence" value="ECO:0007669"/>
    <property type="project" value="UniProtKB-KW"/>
</dbReference>
<dbReference type="GO" id="GO:0046872">
    <property type="term" value="F:metal ion binding"/>
    <property type="evidence" value="ECO:0007669"/>
    <property type="project" value="UniProtKB-KW"/>
</dbReference>
<dbReference type="GO" id="GO:0003723">
    <property type="term" value="F:RNA binding"/>
    <property type="evidence" value="ECO:0007669"/>
    <property type="project" value="UniProtKB-UniRule"/>
</dbReference>
<dbReference type="GO" id="GO:0075526">
    <property type="term" value="P:cap snatching"/>
    <property type="evidence" value="ECO:0007669"/>
    <property type="project" value="UniProtKB-UniRule"/>
</dbReference>
<dbReference type="GO" id="GO:0006351">
    <property type="term" value="P:DNA-templated transcription"/>
    <property type="evidence" value="ECO:0007669"/>
    <property type="project" value="UniProtKB-UniRule"/>
</dbReference>
<dbReference type="GO" id="GO:0039657">
    <property type="term" value="P:symbiont-mediated suppression of host gene expression"/>
    <property type="evidence" value="ECO:0007669"/>
    <property type="project" value="UniProtKB-KW"/>
</dbReference>
<dbReference type="GO" id="GO:0039523">
    <property type="term" value="P:symbiont-mediated suppression of host mRNA transcription via inhibition of RNA polymerase II activity"/>
    <property type="evidence" value="ECO:0007669"/>
    <property type="project" value="UniProtKB-UniRule"/>
</dbReference>
<dbReference type="GO" id="GO:0039694">
    <property type="term" value="P:viral RNA genome replication"/>
    <property type="evidence" value="ECO:0007669"/>
    <property type="project" value="InterPro"/>
</dbReference>
<dbReference type="GO" id="GO:0075523">
    <property type="term" value="P:viral translational frameshifting"/>
    <property type="evidence" value="ECO:0007669"/>
    <property type="project" value="UniProtKB-KW"/>
</dbReference>
<dbReference type="FunFam" id="3.40.91.90:FF:000001">
    <property type="entry name" value="Polymerase acidic protein"/>
    <property type="match status" value="1"/>
</dbReference>
<dbReference type="Gene3D" id="3.40.91.90">
    <property type="entry name" value="Influenza RNA-dependent RNA polymerase subunit PA, endonuclease domain"/>
    <property type="match status" value="1"/>
</dbReference>
<dbReference type="HAMAP" id="MF_04063">
    <property type="entry name" value="INFV_PA"/>
    <property type="match status" value="1"/>
</dbReference>
<dbReference type="InterPro" id="IPR037534">
    <property type="entry name" value="INFV_PA"/>
</dbReference>
<dbReference type="InterPro" id="IPR001009">
    <property type="entry name" value="PA/PA-X"/>
</dbReference>
<dbReference type="InterPro" id="IPR038372">
    <property type="entry name" value="PA/PA-X_sf"/>
</dbReference>
<dbReference type="Pfam" id="PF00603">
    <property type="entry name" value="Flu_PA"/>
    <property type="match status" value="1"/>
</dbReference>
<comment type="function">
    <text evidence="2">Plays an essential role in viral RNA transcription and replication by forming the heterotrimeric polymerase complex together with PB1 and PB2 subunits. The complex transcribes viral mRNAs by using a unique mechanism called cap-snatching. It consists in the hijacking and cleavage of host capped pre-mRNAs. These short capped RNAs are then used as primers for viral mRNAs. The PB2 subunit is responsible for the binding of the 5' cap of cellular pre-mRNAs which are subsequently cleaved after 10-13 nucleotides by the PA subunit that carries the endonuclease activity.</text>
</comment>
<comment type="cofactor">
    <cofactor evidence="2">
        <name>Mn(2+)</name>
        <dbReference type="ChEBI" id="CHEBI:29035"/>
    </cofactor>
    <text evidence="2">Binds 2 manganese ions per subunit.</text>
</comment>
<comment type="subunit">
    <text evidence="1 2">Influenza RNA polymerase is composed of three subunits: PB1, PB2 and PA. Interacts (via C-terminus) with PB1 (via N-terminus).</text>
</comment>
<comment type="subcellular location">
    <subcellularLocation>
        <location evidence="2">Host cytoplasm</location>
    </subcellularLocation>
    <subcellularLocation>
        <location evidence="2">Host nucleus</location>
    </subcellularLocation>
    <text evidence="1 2">PB1 and PA are transported in the host nucleus as a complex.</text>
</comment>
<comment type="alternative products">
    <event type="ribosomal frameshifting"/>
    <isoform>
        <id>P13168-1</id>
        <name>PA</name>
        <sequence type="displayed"/>
    </isoform>
    <isoform>
        <id>P0CK86-1</id>
        <name>PA-X</name>
        <sequence type="external"/>
    </isoform>
</comment>
<comment type="PTM">
    <text evidence="1 2">Phosphorylated on serines and threonines by host kinases, including human casein kinase II.</text>
</comment>
<comment type="similarity">
    <text evidence="2">Belongs to the influenza viruses PA family.</text>
</comment>
<sequence>MEDFVRQCFNPMIVELAEKAMKEYGEDPKIETNKFAAICTHLEVCFMYSDFHFINELGESVIIESGDPNALLKHRFEIIEGRDRTMAWTVVNSICNTTRAEKPKFLPDLYDYKENRFVEIGVTRREVHIYYLEKANKIKSEKTHIHIFSFTGEEMATKADYTLDEESRARIKTRLFTIRQEMASRGLWDSFRQSERGEETIEERFEITGTMRRLADYSLPPNFSSLENFRAYVDGFEPNGCIESKLSQMSKEVNTRIEPFSKTTPRPLRTPGGPPCYQRSKFLLMDALKFSIEDPSHEGEGIPLYDAIKCMKTFFGWKEPNIVKPHEKGINPNYLQAWKQVLAELQDLENEEKIPKTKNMKKTSQLKWALGENMAPEKVDFEDCKDISDLKQYDSDEPETRSLASWIQSEFNKACELTDSSWIELDEIGEDVAPIEHIASMRRNYFTAEVSHCRATEYIMKGVYINTALLNASCAAMDDFQLIPMISKCRTKEGRRKTNLYGFIIKGRSHLRNDTDVVNFVSMEFSLTDPRLEPHNWEKYCVLEIGDMLLRTAVGQVSRPMFLYVRTNGTSKIKMKWGMEMRRCLLQSLQQIESMTEAESSVKEKDMTKEFFENKSETWPIGESPKGVEEGSIGKVCRTLLAKSVFNSLYASPQLEGFSAESRKILLIVQALRDNLEPGTFDIGGLYESIEECLINDPWVLLNASWFNSFLTHALK</sequence>
<reference key="1">
    <citation type="journal article" date="1989" name="Virology">
        <title>Evolutionary pathways of the PA genes of influenza A viruses.</title>
        <authorList>
            <person name="Okazaki K."/>
            <person name="Kawaoka Y."/>
            <person name="Webster R.G."/>
        </authorList>
    </citation>
    <scope>NUCLEOTIDE SEQUENCE [GENOMIC RNA]</scope>
</reference>
<accession>P13168</accession>
<gene>
    <name evidence="2" type="primary">PA</name>
</gene>